<sequence>MPRPTGKKFDKRRQQQNPLFKRKKFCRFTAANVDHIDYKDLETLKDFIGENGKITPARLTGTKSHYQRQLDTAIKRARFLALVPYTDQHKA</sequence>
<name>RS18_PARPJ</name>
<protein>
    <recommendedName>
        <fullName evidence="1">Small ribosomal subunit protein bS18</fullName>
    </recommendedName>
    <alternativeName>
        <fullName evidence="2">30S ribosomal protein S18</fullName>
    </alternativeName>
</protein>
<gene>
    <name evidence="1" type="primary">rpsR</name>
    <name type="ordered locus">Bphyt_1788</name>
</gene>
<reference key="1">
    <citation type="journal article" date="2011" name="J. Bacteriol.">
        <title>Complete genome sequence of the plant growth-promoting endophyte Burkholderia phytofirmans strain PsJN.</title>
        <authorList>
            <person name="Weilharter A."/>
            <person name="Mitter B."/>
            <person name="Shin M.V."/>
            <person name="Chain P.S."/>
            <person name="Nowak J."/>
            <person name="Sessitsch A."/>
        </authorList>
    </citation>
    <scope>NUCLEOTIDE SEQUENCE [LARGE SCALE GENOMIC DNA]</scope>
    <source>
        <strain>DSM 17436 / LMG 22146 / PsJN</strain>
    </source>
</reference>
<keyword id="KW-0687">Ribonucleoprotein</keyword>
<keyword id="KW-0689">Ribosomal protein</keyword>
<keyword id="KW-0694">RNA-binding</keyword>
<keyword id="KW-0699">rRNA-binding</keyword>
<dbReference type="EMBL" id="CP001052">
    <property type="protein sequence ID" value="ACD16196.1"/>
    <property type="molecule type" value="Genomic_DNA"/>
</dbReference>
<dbReference type="RefSeq" id="WP_012432802.1">
    <property type="nucleotide sequence ID" value="NC_010681.1"/>
</dbReference>
<dbReference type="SMR" id="B2T3N5"/>
<dbReference type="STRING" id="398527.Bphyt_1788"/>
<dbReference type="GeneID" id="97042867"/>
<dbReference type="KEGG" id="bpy:Bphyt_1788"/>
<dbReference type="eggNOG" id="COG0238">
    <property type="taxonomic scope" value="Bacteria"/>
</dbReference>
<dbReference type="HOGENOM" id="CLU_148710_0_3_4"/>
<dbReference type="OrthoDB" id="9812008at2"/>
<dbReference type="Proteomes" id="UP000001739">
    <property type="component" value="Chromosome 1"/>
</dbReference>
<dbReference type="GO" id="GO:0022627">
    <property type="term" value="C:cytosolic small ribosomal subunit"/>
    <property type="evidence" value="ECO:0007669"/>
    <property type="project" value="TreeGrafter"/>
</dbReference>
<dbReference type="GO" id="GO:0070181">
    <property type="term" value="F:small ribosomal subunit rRNA binding"/>
    <property type="evidence" value="ECO:0007669"/>
    <property type="project" value="TreeGrafter"/>
</dbReference>
<dbReference type="GO" id="GO:0003735">
    <property type="term" value="F:structural constituent of ribosome"/>
    <property type="evidence" value="ECO:0007669"/>
    <property type="project" value="InterPro"/>
</dbReference>
<dbReference type="GO" id="GO:0006412">
    <property type="term" value="P:translation"/>
    <property type="evidence" value="ECO:0007669"/>
    <property type="project" value="UniProtKB-UniRule"/>
</dbReference>
<dbReference type="Gene3D" id="4.10.640.10">
    <property type="entry name" value="Ribosomal protein S18"/>
    <property type="match status" value="1"/>
</dbReference>
<dbReference type="HAMAP" id="MF_00270">
    <property type="entry name" value="Ribosomal_bS18"/>
    <property type="match status" value="1"/>
</dbReference>
<dbReference type="InterPro" id="IPR001648">
    <property type="entry name" value="Ribosomal_bS18"/>
</dbReference>
<dbReference type="InterPro" id="IPR018275">
    <property type="entry name" value="Ribosomal_bS18_CS"/>
</dbReference>
<dbReference type="InterPro" id="IPR036870">
    <property type="entry name" value="Ribosomal_bS18_sf"/>
</dbReference>
<dbReference type="NCBIfam" id="TIGR00165">
    <property type="entry name" value="S18"/>
    <property type="match status" value="1"/>
</dbReference>
<dbReference type="PANTHER" id="PTHR13479">
    <property type="entry name" value="30S RIBOSOMAL PROTEIN S18"/>
    <property type="match status" value="1"/>
</dbReference>
<dbReference type="PANTHER" id="PTHR13479:SF40">
    <property type="entry name" value="SMALL RIBOSOMAL SUBUNIT PROTEIN BS18M"/>
    <property type="match status" value="1"/>
</dbReference>
<dbReference type="Pfam" id="PF01084">
    <property type="entry name" value="Ribosomal_S18"/>
    <property type="match status" value="1"/>
</dbReference>
<dbReference type="PRINTS" id="PR00974">
    <property type="entry name" value="RIBOSOMALS18"/>
</dbReference>
<dbReference type="SUPFAM" id="SSF46911">
    <property type="entry name" value="Ribosomal protein S18"/>
    <property type="match status" value="1"/>
</dbReference>
<dbReference type="PROSITE" id="PS00057">
    <property type="entry name" value="RIBOSOMAL_S18"/>
    <property type="match status" value="1"/>
</dbReference>
<feature type="chain" id="PRO_1000114408" description="Small ribosomal subunit protein bS18">
    <location>
        <begin position="1"/>
        <end position="91"/>
    </location>
</feature>
<accession>B2T3N5</accession>
<organism>
    <name type="scientific">Paraburkholderia phytofirmans (strain DSM 17436 / LMG 22146 / PsJN)</name>
    <name type="common">Burkholderia phytofirmans</name>
    <dbReference type="NCBI Taxonomy" id="398527"/>
    <lineage>
        <taxon>Bacteria</taxon>
        <taxon>Pseudomonadati</taxon>
        <taxon>Pseudomonadota</taxon>
        <taxon>Betaproteobacteria</taxon>
        <taxon>Burkholderiales</taxon>
        <taxon>Burkholderiaceae</taxon>
        <taxon>Paraburkholderia</taxon>
    </lineage>
</organism>
<proteinExistence type="inferred from homology"/>
<evidence type="ECO:0000255" key="1">
    <source>
        <dbReference type="HAMAP-Rule" id="MF_00270"/>
    </source>
</evidence>
<evidence type="ECO:0000305" key="2"/>
<comment type="function">
    <text evidence="1">Binds as a heterodimer with protein bS6 to the central domain of the 16S rRNA, where it helps stabilize the platform of the 30S subunit.</text>
</comment>
<comment type="subunit">
    <text evidence="1">Part of the 30S ribosomal subunit. Forms a tight heterodimer with protein bS6.</text>
</comment>
<comment type="similarity">
    <text evidence="1">Belongs to the bacterial ribosomal protein bS18 family.</text>
</comment>